<evidence type="ECO:0000269" key="1">
    <source>
    </source>
</evidence>
<evidence type="ECO:0000269" key="2">
    <source>
    </source>
</evidence>
<evidence type="ECO:0000269" key="3">
    <source>
    </source>
</evidence>
<evidence type="ECO:0000269" key="4">
    <source>
    </source>
</evidence>
<evidence type="ECO:0000269" key="5">
    <source>
    </source>
</evidence>
<evidence type="ECO:0000269" key="6">
    <source>
    </source>
</evidence>
<evidence type="ECO:0000269" key="7">
    <source>
    </source>
</evidence>
<evidence type="ECO:0000269" key="8">
    <source>
    </source>
</evidence>
<evidence type="ECO:0000305" key="9"/>
<evidence type="ECO:0000312" key="10">
    <source>
        <dbReference type="MGI" id="MGI:103206"/>
    </source>
</evidence>
<evidence type="ECO:0007744" key="11">
    <source>
        <dbReference type="PDB" id="6R6T"/>
    </source>
</evidence>
<evidence type="ECO:0007744" key="12">
    <source>
        <dbReference type="PDB" id="7BR9"/>
    </source>
</evidence>
<evidence type="ECO:0007829" key="13">
    <source>
        <dbReference type="PDB" id="6R6T"/>
    </source>
</evidence>
<evidence type="ECO:0007829" key="14">
    <source>
        <dbReference type="PDB" id="7BR9"/>
    </source>
</evidence>
<name>IRG1_MOUSE</name>
<sequence length="488" mass="53758">MMLKSVTESFAGMIHGLKVNHLTDGIIRRSKRMILDSLGVGFLGTGTEVFHKVTQYSKIYSSNTSSTVWGRPDFRLPPTYAAFVNGVAVHSMDFDDTWHPATHPSGAVLPVLTALSEALPQIPKFSGLDLLLAFNVGIEVQGRLMHFSKEAKDIPKRFHPPSVVGTLGSAAAASKFLGLSLTKCREALAIAVSHAGAPIANAATQTKPLHIGNAAKHGMEATFLAMLGLQGNKQILDLGSGFGAFYANYSPEDLPSLDSHIWLLDQQDVAFKSFPAHLATHWVADAAAAVRKHLVTPERALFPADHIERIVLRIPDVQYVNRPFPDSEHEARHSFQYVACASLLDGSITVPSFHSQQVNRPQVRELLKKVKLEHPPDNPPSFDTLYCEISITLKDGTTFTERSDTFYGHWRKPLSQEDLRNKFRANASKMLCRDTVESLITVVEKLEDLEDCSVLTRLLKGPSVQDEASKLSSMSSFDHTTLPRFTNI</sequence>
<keyword id="KW-0002">3D-structure</keyword>
<keyword id="KW-0929">Antimicrobial</keyword>
<keyword id="KW-0391">Immunity</keyword>
<keyword id="KW-0395">Inflammatory response</keyword>
<keyword id="KW-0399">Innate immunity</keyword>
<keyword id="KW-0456">Lyase</keyword>
<keyword id="KW-0496">Mitochondrion</keyword>
<keyword id="KW-1185">Reference proteome</keyword>
<dbReference type="EC" id="4.1.1.6" evidence="4 6"/>
<dbReference type="EMBL" id="L38281">
    <property type="protein sequence ID" value="AAA74554.1"/>
    <property type="status" value="ALT_SEQ"/>
    <property type="molecule type" value="mRNA"/>
</dbReference>
<dbReference type="EMBL" id="AK036446">
    <property type="protein sequence ID" value="BAC29433.1"/>
    <property type="molecule type" value="mRNA"/>
</dbReference>
<dbReference type="EMBL" id="AK152177">
    <property type="protein sequence ID" value="BAE31008.1"/>
    <property type="molecule type" value="mRNA"/>
</dbReference>
<dbReference type="EMBL" id="AK152248">
    <property type="protein sequence ID" value="BAE31070.1"/>
    <property type="molecule type" value="mRNA"/>
</dbReference>
<dbReference type="EMBL" id="AK152332">
    <property type="protein sequence ID" value="BAE31131.1"/>
    <property type="molecule type" value="mRNA"/>
</dbReference>
<dbReference type="EMBL" id="AK152635">
    <property type="protein sequence ID" value="BAE31377.1"/>
    <property type="molecule type" value="mRNA"/>
</dbReference>
<dbReference type="EMBL" id="AK172001">
    <property type="protein sequence ID" value="BAE42768.1"/>
    <property type="molecule type" value="mRNA"/>
</dbReference>
<dbReference type="EMBL" id="AK172298">
    <property type="protein sequence ID" value="BAE42932.1"/>
    <property type="molecule type" value="mRNA"/>
</dbReference>
<dbReference type="CCDS" id="CCDS49558.1"/>
<dbReference type="PIR" id="I54546">
    <property type="entry name" value="I54546"/>
</dbReference>
<dbReference type="RefSeq" id="NP_032418.1">
    <property type="nucleotide sequence ID" value="NM_008392.1"/>
</dbReference>
<dbReference type="PDB" id="6R6T">
    <property type="method" value="X-ray"/>
    <property type="resolution" value="2.54 A"/>
    <property type="chains" value="A/B=2-488"/>
</dbReference>
<dbReference type="PDB" id="7BR9">
    <property type="method" value="X-ray"/>
    <property type="resolution" value="3.30 A"/>
    <property type="chains" value="A/B=1-488"/>
</dbReference>
<dbReference type="PDBsum" id="6R6T"/>
<dbReference type="PDBsum" id="7BR9"/>
<dbReference type="SMR" id="P54987"/>
<dbReference type="BioGRID" id="200787">
    <property type="interactions" value="2"/>
</dbReference>
<dbReference type="FunCoup" id="P54987">
    <property type="interactions" value="309"/>
</dbReference>
<dbReference type="IntAct" id="P54987">
    <property type="interactions" value="3"/>
</dbReference>
<dbReference type="MINT" id="P54987"/>
<dbReference type="STRING" id="10090.ENSMUSP00000022722"/>
<dbReference type="iPTMnet" id="P54987"/>
<dbReference type="PhosphoSitePlus" id="P54987"/>
<dbReference type="SwissPalm" id="P54987"/>
<dbReference type="PaxDb" id="10090-ENSMUSP00000022722"/>
<dbReference type="PeptideAtlas" id="P54987"/>
<dbReference type="ProteomicsDB" id="269507"/>
<dbReference type="GeneID" id="16365"/>
<dbReference type="KEGG" id="mmu:16365"/>
<dbReference type="UCSC" id="uc007uwf.2">
    <property type="organism name" value="mouse"/>
</dbReference>
<dbReference type="AGR" id="MGI:103206"/>
<dbReference type="CTD" id="730249"/>
<dbReference type="MGI" id="MGI:103206">
    <property type="gene designation" value="Acod1"/>
</dbReference>
<dbReference type="eggNOG" id="ENOG502QVEB">
    <property type="taxonomic scope" value="Eukaryota"/>
</dbReference>
<dbReference type="InParanoid" id="P54987"/>
<dbReference type="OrthoDB" id="10267976at2759"/>
<dbReference type="PhylomeDB" id="P54987"/>
<dbReference type="TreeFam" id="TF332296"/>
<dbReference type="BRENDA" id="4.1.1.6">
    <property type="organism ID" value="3474"/>
</dbReference>
<dbReference type="BioGRID-ORCS" id="16365">
    <property type="hits" value="5 hits in 79 CRISPR screens"/>
</dbReference>
<dbReference type="ChiTaRS" id="Acod1">
    <property type="organism name" value="mouse"/>
</dbReference>
<dbReference type="PRO" id="PR:P54987"/>
<dbReference type="Proteomes" id="UP000000589">
    <property type="component" value="Unplaced"/>
</dbReference>
<dbReference type="RNAct" id="P54987">
    <property type="molecule type" value="protein"/>
</dbReference>
<dbReference type="GO" id="GO:0005739">
    <property type="term" value="C:mitochondrion"/>
    <property type="evidence" value="ECO:0000314"/>
    <property type="project" value="UniProtKB"/>
</dbReference>
<dbReference type="GO" id="GO:0047613">
    <property type="term" value="F:aconitate decarboxylase activity"/>
    <property type="evidence" value="ECO:0000314"/>
    <property type="project" value="UniProtKB"/>
</dbReference>
<dbReference type="GO" id="GO:0042803">
    <property type="term" value="F:protein homodimerization activity"/>
    <property type="evidence" value="ECO:0000314"/>
    <property type="project" value="UniProtKB"/>
</dbReference>
<dbReference type="GO" id="GO:0035458">
    <property type="term" value="P:cellular response to interferon-beta"/>
    <property type="evidence" value="ECO:0000314"/>
    <property type="project" value="UniProtKB"/>
</dbReference>
<dbReference type="GO" id="GO:0071347">
    <property type="term" value="P:cellular response to interleukin-1"/>
    <property type="evidence" value="ECO:0000314"/>
    <property type="project" value="UniProtKB"/>
</dbReference>
<dbReference type="GO" id="GO:0071222">
    <property type="term" value="P:cellular response to lipopolysaccharide"/>
    <property type="evidence" value="ECO:0000314"/>
    <property type="project" value="UniProtKB"/>
</dbReference>
<dbReference type="GO" id="GO:0071219">
    <property type="term" value="P:cellular response to molecule of bacterial origin"/>
    <property type="evidence" value="ECO:0000314"/>
    <property type="project" value="UniProtKB"/>
</dbReference>
<dbReference type="GO" id="GO:0071393">
    <property type="term" value="P:cellular response to progesterone stimulus"/>
    <property type="evidence" value="ECO:0000314"/>
    <property type="project" value="UniProtKB"/>
</dbReference>
<dbReference type="GO" id="GO:0071356">
    <property type="term" value="P:cellular response to tumor necrosis factor"/>
    <property type="evidence" value="ECO:0000314"/>
    <property type="project" value="UniProtKB"/>
</dbReference>
<dbReference type="GO" id="GO:0071346">
    <property type="term" value="P:cellular response to type II interferon"/>
    <property type="evidence" value="ECO:0000314"/>
    <property type="project" value="UniProtKB"/>
</dbReference>
<dbReference type="GO" id="GO:0006952">
    <property type="term" value="P:defense response"/>
    <property type="evidence" value="ECO:0000314"/>
    <property type="project" value="UniProtKB"/>
</dbReference>
<dbReference type="GO" id="GO:0051607">
    <property type="term" value="P:defense response to virus"/>
    <property type="evidence" value="ECO:0000315"/>
    <property type="project" value="UniProtKB"/>
</dbReference>
<dbReference type="GO" id="GO:0007566">
    <property type="term" value="P:embryo implantation"/>
    <property type="evidence" value="ECO:0000315"/>
    <property type="project" value="UniProtKB"/>
</dbReference>
<dbReference type="GO" id="GO:0006954">
    <property type="term" value="P:inflammatory response"/>
    <property type="evidence" value="ECO:0007669"/>
    <property type="project" value="UniProtKB-KW"/>
</dbReference>
<dbReference type="GO" id="GO:0050728">
    <property type="term" value="P:negative regulation of inflammatory response"/>
    <property type="evidence" value="ECO:0000314"/>
    <property type="project" value="UniProtKB"/>
</dbReference>
<dbReference type="GO" id="GO:0045824">
    <property type="term" value="P:negative regulation of innate immune response"/>
    <property type="evidence" value="ECO:0000314"/>
    <property type="project" value="UniProtKB"/>
</dbReference>
<dbReference type="GO" id="GO:0032088">
    <property type="term" value="P:negative regulation of NF-kappaB transcription factor activity"/>
    <property type="evidence" value="ECO:0000315"/>
    <property type="project" value="UniProtKB"/>
</dbReference>
<dbReference type="GO" id="GO:0034136">
    <property type="term" value="P:negative regulation of toll-like receptor 2 signaling pathway"/>
    <property type="evidence" value="ECO:0000315"/>
    <property type="project" value="UniProtKB"/>
</dbReference>
<dbReference type="GO" id="GO:0034144">
    <property type="term" value="P:negative regulation of toll-like receptor 4 signaling pathway"/>
    <property type="evidence" value="ECO:0000314"/>
    <property type="project" value="UniProtKB"/>
</dbReference>
<dbReference type="GO" id="GO:0032480">
    <property type="term" value="P:negative regulation of type I interferon production"/>
    <property type="evidence" value="ECO:0000315"/>
    <property type="project" value="UniProtKB"/>
</dbReference>
<dbReference type="GO" id="GO:0002760">
    <property type="term" value="P:positive regulation of antimicrobial humoral response"/>
    <property type="evidence" value="ECO:0000314"/>
    <property type="project" value="UniProtKB"/>
</dbReference>
<dbReference type="GO" id="GO:2000379">
    <property type="term" value="P:positive regulation of reactive oxygen species metabolic process"/>
    <property type="evidence" value="ECO:0000314"/>
    <property type="project" value="UniProtKB"/>
</dbReference>
<dbReference type="GO" id="GO:0009617">
    <property type="term" value="P:response to bacterium"/>
    <property type="evidence" value="ECO:0000270"/>
    <property type="project" value="MGI"/>
</dbReference>
<dbReference type="GO" id="GO:0032496">
    <property type="term" value="P:response to lipopolysaccharide"/>
    <property type="evidence" value="ECO:0000314"/>
    <property type="project" value="MGI"/>
</dbReference>
<dbReference type="GO" id="GO:0072573">
    <property type="term" value="P:tolerance induction to lipopolysaccharide"/>
    <property type="evidence" value="ECO:0000314"/>
    <property type="project" value="UniProtKB"/>
</dbReference>
<dbReference type="FunFam" id="1.10.4100.10:FF:000002">
    <property type="entry name" value="Aconitate decarboxylase 1"/>
    <property type="match status" value="1"/>
</dbReference>
<dbReference type="FunFam" id="3.30.1330.120:FF:000002">
    <property type="entry name" value="Aconitate decarboxylase 1"/>
    <property type="match status" value="1"/>
</dbReference>
<dbReference type="Gene3D" id="1.10.4100.10">
    <property type="entry name" value="2-methylcitrate dehydratase PrpD"/>
    <property type="match status" value="1"/>
</dbReference>
<dbReference type="Gene3D" id="3.30.1330.120">
    <property type="entry name" value="2-methylcitrate dehydratase PrpD"/>
    <property type="match status" value="1"/>
</dbReference>
<dbReference type="InterPro" id="IPR036148">
    <property type="entry name" value="MmgE/PrpD_sf"/>
</dbReference>
<dbReference type="InterPro" id="IPR042183">
    <property type="entry name" value="MmgE/PrpD_sf_1"/>
</dbReference>
<dbReference type="InterPro" id="IPR042188">
    <property type="entry name" value="MmgE/PrpD_sf_2"/>
</dbReference>
<dbReference type="InterPro" id="IPR005656">
    <property type="entry name" value="MmgE_PrpD"/>
</dbReference>
<dbReference type="InterPro" id="IPR045337">
    <property type="entry name" value="MmgE_PrpD_C"/>
</dbReference>
<dbReference type="InterPro" id="IPR045336">
    <property type="entry name" value="MmgE_PrpD_N"/>
</dbReference>
<dbReference type="PANTHER" id="PTHR16943">
    <property type="entry name" value="2-METHYLCITRATE DEHYDRATASE-RELATED"/>
    <property type="match status" value="1"/>
</dbReference>
<dbReference type="PANTHER" id="PTHR16943:SF11">
    <property type="entry name" value="CIS-ACONITATE DECARBOXYLASE"/>
    <property type="match status" value="1"/>
</dbReference>
<dbReference type="Pfam" id="PF19305">
    <property type="entry name" value="MmgE_PrpD_C"/>
    <property type="match status" value="1"/>
</dbReference>
<dbReference type="Pfam" id="PF03972">
    <property type="entry name" value="MmgE_PrpD_N"/>
    <property type="match status" value="1"/>
</dbReference>
<dbReference type="SUPFAM" id="SSF103378">
    <property type="entry name" value="2-methylcitrate dehydratase PrpD"/>
    <property type="match status" value="1"/>
</dbReference>
<comment type="function">
    <text evidence="1 3 4 5 6 8">Cis-aconitate decarboxylase that catalyzes production of itaconate and is involved in the inhibition of the inflammatory response (PubMed:23609450, PubMed:23610393, PubMed:30635240, PubMed:31548418). Acts as a negative regulator of the Toll-like receptors (TLRs)-mediated inflammatory innate response by stimulating the tumor necrosis factor alpha-induced protein TNFAIP3 expression via reactive oxygen species (ROS) in LPS-tolerized macrophages (PubMed:23609450). Involved in antimicrobial response of innate immune cells; ACOD1-mediated itaconic acid production contributes to the antimicrobial activity of macrophages by generating itaconate, leading to alkylation of proteins, such as TFEB (PubMed:23610393, PubMed:35662396). Involved in antiviral response following infection by flavivirus in neurons: ACOD1-mediated itaconate production inhibits the activity of succinate dehydrogenase, generating a metabolic state in neurons that suppresses replication of viral genomes (PubMed:30635240). Plays a role in the embryo implantation (PubMed:14500577).</text>
</comment>
<comment type="catalytic activity">
    <reaction evidence="4 6">
        <text>cis-aconitate + H(+) = itaconate + CO2</text>
        <dbReference type="Rhea" id="RHEA:15253"/>
        <dbReference type="ChEBI" id="CHEBI:15378"/>
        <dbReference type="ChEBI" id="CHEBI:16383"/>
        <dbReference type="ChEBI" id="CHEBI:16526"/>
        <dbReference type="ChEBI" id="CHEBI:17240"/>
        <dbReference type="EC" id="4.1.1.6"/>
    </reaction>
    <physiologicalReaction direction="left-to-right" evidence="4 6">
        <dbReference type="Rhea" id="RHEA:15254"/>
    </physiologicalReaction>
</comment>
<comment type="biophysicochemical properties">
    <kinetics>
        <KM evidence="6">0.65 mM for cis-aconitate</KM>
        <text evidence="6">kcat is 4.94 sec(-1) for cis-aconitate.</text>
    </kinetics>
    <phDependence>
        <text evidence="6">Optimum pH is 7.0.</text>
    </phDependence>
</comment>
<comment type="subunit">
    <text evidence="6 7">Homodimer.</text>
</comment>
<comment type="subcellular location">
    <subcellularLocation>
        <location evidence="2">Mitochondrion</location>
    </subcellularLocation>
</comment>
<comment type="tissue specificity">
    <text evidence="1 3 4 8">Expressed in LPS-tolerized macrophages (at protein level) (PubMed:23609450, PubMed:35662396). Expressed in the luminal epithelial cells of pregnant uterus (PubMed:14500577). Expressed in microglia and macrophage cells (PubMed:23609450, PubMed:23610393, PubMed:35662396).</text>
</comment>
<comment type="induction">
    <text evidence="1 2 3 4 5">Up-regulated after lipopolysaccharide (LPS) stimulation (PubMed:23609450, PubMed:23610393). Up-regulated in LPS-tolerized macrophage by LPS (PubMed:23609450, PubMed:23610393). Up-regulated synergistically by pro-inflammatory cytokines TNF and IFNG (PubMed:19014335). Up-regulated by pro-inflammatory cytokines IL1B and IFNB1 (PubMed:19014335). Up-regulated by progesterone and at the time of the embryo implantation (PubMed:14500577). Expression is activated by IRF1 in neurons in response to flavivirus infection in neurons (PubMed:30635240).</text>
</comment>
<comment type="similarity">
    <text evidence="9">Belongs to the PrpD family.</text>
</comment>
<comment type="sequence caution" evidence="9">
    <conflict type="frameshift">
        <sequence resource="EMBL-CDS" id="AAA74554"/>
    </conflict>
</comment>
<feature type="chain" id="PRO_0000084233" description="Cis-aconitate decarboxylase">
    <location>
        <begin position="1"/>
        <end position="488"/>
    </location>
</feature>
<feature type="sequence conflict" description="In Ref. 2; BAE31070/BAE31377/BAE31131/BAE31008." evidence="9" ref="2">
    <original>IP</original>
    <variation>TL</variation>
    <location>
        <begin position="122"/>
        <end position="123"/>
    </location>
</feature>
<feature type="sequence conflict" description="In Ref. 2; BAE42768/BAC29433/BAE42932." evidence="9" ref="2">
    <original>I</original>
    <variation>T</variation>
    <location>
        <position position="122"/>
    </location>
</feature>
<feature type="sequence conflict" description="In Ref. 2; BAE42768." evidence="9" ref="2">
    <original>N</original>
    <variation>S</variation>
    <location>
        <position position="248"/>
    </location>
</feature>
<feature type="sequence conflict" description="In Ref. 2; BAE31070/BAE31377/BAE31131/BAE31008." evidence="9" ref="2">
    <original>R</original>
    <variation>G</variation>
    <location>
        <position position="402"/>
    </location>
</feature>
<feature type="helix" evidence="13">
    <location>
        <begin position="6"/>
        <end position="16"/>
    </location>
</feature>
<feature type="helix" evidence="13">
    <location>
        <begin position="19"/>
        <end position="21"/>
    </location>
</feature>
<feature type="helix" evidence="13">
    <location>
        <begin position="24"/>
        <end position="44"/>
    </location>
</feature>
<feature type="helix" evidence="13">
    <location>
        <begin position="48"/>
        <end position="57"/>
    </location>
</feature>
<feature type="helix" evidence="13">
    <location>
        <begin position="58"/>
        <end position="60"/>
    </location>
</feature>
<feature type="strand" evidence="13">
    <location>
        <begin position="65"/>
        <end position="68"/>
    </location>
</feature>
<feature type="strand" evidence="13">
    <location>
        <begin position="71"/>
        <end position="76"/>
    </location>
</feature>
<feature type="helix" evidence="13">
    <location>
        <begin position="78"/>
        <end position="90"/>
    </location>
</feature>
<feature type="turn" evidence="14">
    <location>
        <begin position="91"/>
        <end position="93"/>
    </location>
</feature>
<feature type="strand" evidence="13">
    <location>
        <begin position="99"/>
        <end position="101"/>
    </location>
</feature>
<feature type="turn" evidence="13">
    <location>
        <begin position="106"/>
        <end position="108"/>
    </location>
</feature>
<feature type="helix" evidence="13">
    <location>
        <begin position="109"/>
        <end position="118"/>
    </location>
</feature>
<feature type="helix" evidence="13">
    <location>
        <begin position="127"/>
        <end position="145"/>
    </location>
</feature>
<feature type="helix" evidence="14">
    <location>
        <begin position="149"/>
        <end position="152"/>
    </location>
</feature>
<feature type="strand" evidence="14">
    <location>
        <begin position="156"/>
        <end position="158"/>
    </location>
</feature>
<feature type="helix" evidence="13">
    <location>
        <begin position="160"/>
        <end position="176"/>
    </location>
</feature>
<feature type="helix" evidence="13">
    <location>
        <begin position="181"/>
        <end position="192"/>
    </location>
</feature>
<feature type="helix" evidence="13">
    <location>
        <begin position="199"/>
        <end position="203"/>
    </location>
</feature>
<feature type="helix" evidence="13">
    <location>
        <begin position="207"/>
        <end position="226"/>
    </location>
</feature>
<feature type="turn" evidence="13">
    <location>
        <begin position="233"/>
        <end position="237"/>
    </location>
</feature>
<feature type="turn" evidence="13">
    <location>
        <begin position="239"/>
        <end position="241"/>
    </location>
</feature>
<feature type="helix" evidence="13">
    <location>
        <begin position="242"/>
        <end position="245"/>
    </location>
</feature>
<feature type="strand" evidence="13">
    <location>
        <begin position="246"/>
        <end position="249"/>
    </location>
</feature>
<feature type="turn" evidence="13">
    <location>
        <begin position="257"/>
        <end position="259"/>
    </location>
</feature>
<feature type="helix" evidence="13">
    <location>
        <begin position="263"/>
        <end position="266"/>
    </location>
</feature>
<feature type="strand" evidence="13">
    <location>
        <begin position="273"/>
        <end position="276"/>
    </location>
</feature>
<feature type="helix" evidence="13">
    <location>
        <begin position="279"/>
        <end position="291"/>
    </location>
</feature>
<feature type="strand" evidence="13">
    <location>
        <begin position="297"/>
        <end position="299"/>
    </location>
</feature>
<feature type="helix" evidence="13">
    <location>
        <begin position="304"/>
        <end position="306"/>
    </location>
</feature>
<feature type="strand" evidence="13">
    <location>
        <begin position="307"/>
        <end position="313"/>
    </location>
</feature>
<feature type="helix" evidence="13">
    <location>
        <begin position="318"/>
        <end position="320"/>
    </location>
</feature>
<feature type="helix" evidence="13">
    <location>
        <begin position="328"/>
        <end position="331"/>
    </location>
</feature>
<feature type="helix" evidence="13">
    <location>
        <begin position="335"/>
        <end position="345"/>
    </location>
</feature>
<feature type="helix" evidence="13">
    <location>
        <begin position="350"/>
        <end position="353"/>
    </location>
</feature>
<feature type="helix" evidence="13">
    <location>
        <begin position="355"/>
        <end position="358"/>
    </location>
</feature>
<feature type="helix" evidence="13">
    <location>
        <begin position="361"/>
        <end position="367"/>
    </location>
</feature>
<feature type="strand" evidence="13">
    <location>
        <begin position="370"/>
        <end position="373"/>
    </location>
</feature>
<feature type="turn" evidence="13">
    <location>
        <begin position="382"/>
        <end position="384"/>
    </location>
</feature>
<feature type="strand" evidence="13">
    <location>
        <begin position="387"/>
        <end position="393"/>
    </location>
</feature>
<feature type="strand" evidence="13">
    <location>
        <begin position="398"/>
        <end position="405"/>
    </location>
</feature>
<feature type="helix" evidence="13">
    <location>
        <begin position="416"/>
        <end position="426"/>
    </location>
</feature>
<feature type="turn" evidence="13">
    <location>
        <begin position="427"/>
        <end position="430"/>
    </location>
</feature>
<feature type="helix" evidence="13">
    <location>
        <begin position="433"/>
        <end position="444"/>
    </location>
</feature>
<feature type="helix" evidence="14">
    <location>
        <begin position="446"/>
        <end position="448"/>
    </location>
</feature>
<feature type="helix" evidence="13">
    <location>
        <begin position="453"/>
        <end position="457"/>
    </location>
</feature>
<gene>
    <name evidence="10" type="primary">Acod1</name>
    <name type="synonym">Irg1</name>
</gene>
<reference key="1">
    <citation type="journal article" date="1995" name="Immunogenetics">
        <title>Cloning and analysis of gene regulation of a novel LPS-inducible cDNA.</title>
        <authorList>
            <person name="Lee C.G.L."/>
            <person name="Jenkins N.A."/>
            <person name="Gilbert D.J."/>
            <person name="Copeland N.G."/>
            <person name="O'Brien W.E."/>
        </authorList>
    </citation>
    <scope>NUCLEOTIDE SEQUENCE [MRNA]</scope>
    <source>
        <strain>BALB/cJ</strain>
    </source>
</reference>
<reference key="2">
    <citation type="journal article" date="2005" name="Science">
        <title>The transcriptional landscape of the mammalian genome.</title>
        <authorList>
            <person name="Carninci P."/>
            <person name="Kasukawa T."/>
            <person name="Katayama S."/>
            <person name="Gough J."/>
            <person name="Frith M.C."/>
            <person name="Maeda N."/>
            <person name="Oyama R."/>
            <person name="Ravasi T."/>
            <person name="Lenhard B."/>
            <person name="Wells C."/>
            <person name="Kodzius R."/>
            <person name="Shimokawa K."/>
            <person name="Bajic V.B."/>
            <person name="Brenner S.E."/>
            <person name="Batalov S."/>
            <person name="Forrest A.R."/>
            <person name="Zavolan M."/>
            <person name="Davis M.J."/>
            <person name="Wilming L.G."/>
            <person name="Aidinis V."/>
            <person name="Allen J.E."/>
            <person name="Ambesi-Impiombato A."/>
            <person name="Apweiler R."/>
            <person name="Aturaliya R.N."/>
            <person name="Bailey T.L."/>
            <person name="Bansal M."/>
            <person name="Baxter L."/>
            <person name="Beisel K.W."/>
            <person name="Bersano T."/>
            <person name="Bono H."/>
            <person name="Chalk A.M."/>
            <person name="Chiu K.P."/>
            <person name="Choudhary V."/>
            <person name="Christoffels A."/>
            <person name="Clutterbuck D.R."/>
            <person name="Crowe M.L."/>
            <person name="Dalla E."/>
            <person name="Dalrymple B.P."/>
            <person name="de Bono B."/>
            <person name="Della Gatta G."/>
            <person name="di Bernardo D."/>
            <person name="Down T."/>
            <person name="Engstrom P."/>
            <person name="Fagiolini M."/>
            <person name="Faulkner G."/>
            <person name="Fletcher C.F."/>
            <person name="Fukushima T."/>
            <person name="Furuno M."/>
            <person name="Futaki S."/>
            <person name="Gariboldi M."/>
            <person name="Georgii-Hemming P."/>
            <person name="Gingeras T.R."/>
            <person name="Gojobori T."/>
            <person name="Green R.E."/>
            <person name="Gustincich S."/>
            <person name="Harbers M."/>
            <person name="Hayashi Y."/>
            <person name="Hensch T.K."/>
            <person name="Hirokawa N."/>
            <person name="Hill D."/>
            <person name="Huminiecki L."/>
            <person name="Iacono M."/>
            <person name="Ikeo K."/>
            <person name="Iwama A."/>
            <person name="Ishikawa T."/>
            <person name="Jakt M."/>
            <person name="Kanapin A."/>
            <person name="Katoh M."/>
            <person name="Kawasawa Y."/>
            <person name="Kelso J."/>
            <person name="Kitamura H."/>
            <person name="Kitano H."/>
            <person name="Kollias G."/>
            <person name="Krishnan S.P."/>
            <person name="Kruger A."/>
            <person name="Kummerfeld S.K."/>
            <person name="Kurochkin I.V."/>
            <person name="Lareau L.F."/>
            <person name="Lazarevic D."/>
            <person name="Lipovich L."/>
            <person name="Liu J."/>
            <person name="Liuni S."/>
            <person name="McWilliam S."/>
            <person name="Madan Babu M."/>
            <person name="Madera M."/>
            <person name="Marchionni L."/>
            <person name="Matsuda H."/>
            <person name="Matsuzawa S."/>
            <person name="Miki H."/>
            <person name="Mignone F."/>
            <person name="Miyake S."/>
            <person name="Morris K."/>
            <person name="Mottagui-Tabar S."/>
            <person name="Mulder N."/>
            <person name="Nakano N."/>
            <person name="Nakauchi H."/>
            <person name="Ng P."/>
            <person name="Nilsson R."/>
            <person name="Nishiguchi S."/>
            <person name="Nishikawa S."/>
            <person name="Nori F."/>
            <person name="Ohara O."/>
            <person name="Okazaki Y."/>
            <person name="Orlando V."/>
            <person name="Pang K.C."/>
            <person name="Pavan W.J."/>
            <person name="Pavesi G."/>
            <person name="Pesole G."/>
            <person name="Petrovsky N."/>
            <person name="Piazza S."/>
            <person name="Reed J."/>
            <person name="Reid J.F."/>
            <person name="Ring B.Z."/>
            <person name="Ringwald M."/>
            <person name="Rost B."/>
            <person name="Ruan Y."/>
            <person name="Salzberg S.L."/>
            <person name="Sandelin A."/>
            <person name="Schneider C."/>
            <person name="Schoenbach C."/>
            <person name="Sekiguchi K."/>
            <person name="Semple C.A."/>
            <person name="Seno S."/>
            <person name="Sessa L."/>
            <person name="Sheng Y."/>
            <person name="Shibata Y."/>
            <person name="Shimada H."/>
            <person name="Shimada K."/>
            <person name="Silva D."/>
            <person name="Sinclair B."/>
            <person name="Sperling S."/>
            <person name="Stupka E."/>
            <person name="Sugiura K."/>
            <person name="Sultana R."/>
            <person name="Takenaka Y."/>
            <person name="Taki K."/>
            <person name="Tammoja K."/>
            <person name="Tan S.L."/>
            <person name="Tang S."/>
            <person name="Taylor M.S."/>
            <person name="Tegner J."/>
            <person name="Teichmann S.A."/>
            <person name="Ueda H.R."/>
            <person name="van Nimwegen E."/>
            <person name="Verardo R."/>
            <person name="Wei C.L."/>
            <person name="Yagi K."/>
            <person name="Yamanishi H."/>
            <person name="Zabarovsky E."/>
            <person name="Zhu S."/>
            <person name="Zimmer A."/>
            <person name="Hide W."/>
            <person name="Bult C."/>
            <person name="Grimmond S.M."/>
            <person name="Teasdale R.D."/>
            <person name="Liu E.T."/>
            <person name="Brusic V."/>
            <person name="Quackenbush J."/>
            <person name="Wahlestedt C."/>
            <person name="Mattick J.S."/>
            <person name="Hume D.A."/>
            <person name="Kai C."/>
            <person name="Sasaki D."/>
            <person name="Tomaru Y."/>
            <person name="Fukuda S."/>
            <person name="Kanamori-Katayama M."/>
            <person name="Suzuki M."/>
            <person name="Aoki J."/>
            <person name="Arakawa T."/>
            <person name="Iida J."/>
            <person name="Imamura K."/>
            <person name="Itoh M."/>
            <person name="Kato T."/>
            <person name="Kawaji H."/>
            <person name="Kawagashira N."/>
            <person name="Kawashima T."/>
            <person name="Kojima M."/>
            <person name="Kondo S."/>
            <person name="Konno H."/>
            <person name="Nakano K."/>
            <person name="Ninomiya N."/>
            <person name="Nishio T."/>
            <person name="Okada M."/>
            <person name="Plessy C."/>
            <person name="Shibata K."/>
            <person name="Shiraki T."/>
            <person name="Suzuki S."/>
            <person name="Tagami M."/>
            <person name="Waki K."/>
            <person name="Watahiki A."/>
            <person name="Okamura-Oho Y."/>
            <person name="Suzuki H."/>
            <person name="Kawai J."/>
            <person name="Hayashizaki Y."/>
        </authorList>
    </citation>
    <scope>NUCLEOTIDE SEQUENCE [LARGE SCALE MRNA]</scope>
    <source>
        <strain>C57BL/6J</strain>
        <strain>NOD</strain>
        <tissue>Bone</tissue>
        <tissue>Spleen</tissue>
    </source>
</reference>
<reference key="3">
    <citation type="journal article" date="2003" name="Endocrinology">
        <title>Immune-responsive gene 1 is a novel target of progesterone receptor and plays a critical role during implantation in the mouse.</title>
        <authorList>
            <person name="Cheon Y.P."/>
            <person name="Xu X."/>
            <person name="Bagchi M.K."/>
            <person name="Bagchi I.C."/>
        </authorList>
    </citation>
    <scope>FUNCTION</scope>
    <scope>INDUCTION BY PROGESTERONE</scope>
    <scope>TISSUE SPECIFICITY</scope>
</reference>
<reference key="4">
    <citation type="journal article" date="2009" name="J. Interferon Cytokine Res.">
        <title>The proinflammatory cytokine-induced IRG1 protein associates with mitochondria.</title>
        <authorList>
            <person name="Degrandi D."/>
            <person name="Hoffmann R."/>
            <person name="Beuter-Gunia C."/>
            <person name="Pfeffer K."/>
        </authorList>
    </citation>
    <scope>SUBCELLULAR LOCATION</scope>
    <scope>INDUCTION</scope>
</reference>
<reference key="5">
    <citation type="journal article" date="2013" name="J. Biol. Chem.">
        <title>Immune responsive gene 1 (IRG1) promotes endotoxin tolerance by increasing A20 expression in macrophages through ROS.</title>
        <authorList>
            <person name="Li Y."/>
            <person name="Zhang P."/>
            <person name="Wang C."/>
            <person name="Han C."/>
            <person name="Meng J."/>
            <person name="Liu X."/>
            <person name="Xu S."/>
            <person name="Li N."/>
            <person name="Wang Q."/>
            <person name="Shi X."/>
            <person name="Cao X."/>
        </authorList>
    </citation>
    <scope>FUNCTION</scope>
    <scope>INDUCTION BY LPS</scope>
    <scope>TISSUE SPECIFICITY</scope>
</reference>
<reference key="6">
    <citation type="journal article" date="2013" name="Proc. Natl. Acad. Sci. U.S.A.">
        <title>Immune-responsive gene 1 protein links metabolism to immunity by catalyzing itaconic acid production.</title>
        <authorList>
            <person name="Michelucci A."/>
            <person name="Cordes T."/>
            <person name="Ghelfi J."/>
            <person name="Pailot A."/>
            <person name="Reiling N."/>
            <person name="Goldmann O."/>
            <person name="Binz T."/>
            <person name="Wegner A."/>
            <person name="Tallam A."/>
            <person name="Rausell A."/>
            <person name="Buttini M."/>
            <person name="Linster C.L."/>
            <person name="Medina E."/>
            <person name="Balling R."/>
            <person name="Hiller K."/>
        </authorList>
    </citation>
    <scope>FUNCTION</scope>
    <scope>CATALYTIC ACTIVITY</scope>
    <scope>INDUCTION BY LPS</scope>
    <scope>TISSUE SPECIFICITY</scope>
</reference>
<reference key="7">
    <citation type="journal article" date="2019" name="Immunity">
        <title>The nucleotide sensor ZBP1 and kinase RIPK3 induce the enzyme IRG1 to promote an antiviral metabolic state in neurons.</title>
        <authorList>
            <person name="Daniels B.P."/>
            <person name="Kofman S.B."/>
            <person name="Smith J.R."/>
            <person name="Norris G.T."/>
            <person name="Snyder A.G."/>
            <person name="Kolb J.P."/>
            <person name="Gao X."/>
            <person name="Locasale J.W."/>
            <person name="Martinez J."/>
            <person name="Gale M. Jr."/>
            <person name="Loo Y.M."/>
            <person name="Oberst A."/>
        </authorList>
    </citation>
    <scope>FUNCTION</scope>
    <scope>INDUCTION</scope>
</reference>
<reference key="8">
    <citation type="journal article" date="2022" name="Mol. Cell">
        <title>Itaconate is a lysosomal inducer that promotes antibacterial innate immunity.</title>
        <authorList>
            <person name="Zhang Z."/>
            <person name="Chen C."/>
            <person name="Yang F."/>
            <person name="Zeng Y.X."/>
            <person name="Sun P."/>
            <person name="Liu P."/>
            <person name="Li X."/>
        </authorList>
    </citation>
    <scope>FUNCTION</scope>
</reference>
<reference evidence="11" key="9">
    <citation type="journal article" date="2019" name="Proc. Natl. Acad. Sci. U.S.A.">
        <title>Crystal structure of cis-aconitate decarboxylase reveals the impact of naturally occurring human mutations on itaconate synthesis.</title>
        <authorList>
            <person name="Chen F."/>
            <person name="Lukat P."/>
            <person name="Iqbal A.A."/>
            <person name="Saile K."/>
            <person name="Kaever V."/>
            <person name="van den Heuvel J."/>
            <person name="Blankenfeldt W."/>
            <person name="Buessow K."/>
            <person name="Pessler F."/>
        </authorList>
    </citation>
    <scope>X-RAY CRYSTALLOGRAPHY (2.54 ANGSTROMS) OF 2-488</scope>
    <scope>FUNCTION</scope>
    <scope>CATALYTIC ACTIVITY</scope>
    <scope>BIOPHYSICOCHEMICAL PROPERTIES</scope>
    <scope>SUBUNIT</scope>
</reference>
<reference evidence="12" key="10">
    <citation type="journal article" date="2020" name="PLoS ONE">
        <title>The crystal structure of mouse IRG1 suggests that cis-aconitate decarboxylase has an open and closed conformation.</title>
        <authorList>
            <person name="Chun H.L."/>
            <person name="Lee S.Y."/>
            <person name="Kim K.H."/>
            <person name="Lee C.S."/>
            <person name="Oh T.J."/>
            <person name="Park H.H."/>
        </authorList>
    </citation>
    <scope>X-RAY CRYSTALLOGRAPHY (3.30 ANGSTROMS)</scope>
    <scope>SUBUNIT</scope>
</reference>
<protein>
    <recommendedName>
        <fullName>Cis-aconitate decarboxylase</fullName>
        <shortName>CAD</shortName>
        <ecNumber evidence="4 6">4.1.1.6</ecNumber>
    </recommendedName>
    <alternativeName>
        <fullName>Aconitate decarboxylase</fullName>
    </alternativeName>
    <alternativeName>
        <fullName evidence="10">Aconitate decarboxylase 1</fullName>
    </alternativeName>
    <alternativeName>
        <fullName>Cis-aconitic acid decarboxylase</fullName>
    </alternativeName>
    <alternativeName>
        <fullName>Immune-responsive gene 1 protein</fullName>
    </alternativeName>
</protein>
<accession>P54987</accession>
<accession>Q3TAA1</accession>
<accession>Q3U8E8</accession>
<accession>Q8CBA6</accession>
<proteinExistence type="evidence at protein level"/>
<organism>
    <name type="scientific">Mus musculus</name>
    <name type="common">Mouse</name>
    <dbReference type="NCBI Taxonomy" id="10090"/>
    <lineage>
        <taxon>Eukaryota</taxon>
        <taxon>Metazoa</taxon>
        <taxon>Chordata</taxon>
        <taxon>Craniata</taxon>
        <taxon>Vertebrata</taxon>
        <taxon>Euteleostomi</taxon>
        <taxon>Mammalia</taxon>
        <taxon>Eutheria</taxon>
        <taxon>Euarchontoglires</taxon>
        <taxon>Glires</taxon>
        <taxon>Rodentia</taxon>
        <taxon>Myomorpha</taxon>
        <taxon>Muroidea</taxon>
        <taxon>Muridae</taxon>
        <taxon>Murinae</taxon>
        <taxon>Mus</taxon>
        <taxon>Mus</taxon>
    </lineage>
</organism>